<organism>
    <name type="scientific">Thermus thermophilus</name>
    <dbReference type="NCBI Taxonomy" id="274"/>
    <lineage>
        <taxon>Bacteria</taxon>
        <taxon>Thermotogati</taxon>
        <taxon>Deinococcota</taxon>
        <taxon>Deinococci</taxon>
        <taxon>Thermales</taxon>
        <taxon>Thermaceae</taxon>
        <taxon>Thermus</taxon>
    </lineage>
</organism>
<proteinExistence type="inferred from homology"/>
<dbReference type="EMBL" id="AJ495840">
    <property type="protein sequence ID" value="CAD42331.1"/>
    <property type="molecule type" value="Genomic_DNA"/>
</dbReference>
<dbReference type="SMR" id="Q70YI5"/>
<dbReference type="OMA" id="TMFIAPK"/>
<dbReference type="GO" id="GO:0005829">
    <property type="term" value="C:cytosol"/>
    <property type="evidence" value="ECO:0007669"/>
    <property type="project" value="TreeGrafter"/>
</dbReference>
<dbReference type="GO" id="GO:0016020">
    <property type="term" value="C:membrane"/>
    <property type="evidence" value="ECO:0007669"/>
    <property type="project" value="TreeGrafter"/>
</dbReference>
<dbReference type="GO" id="GO:0043022">
    <property type="term" value="F:ribosome binding"/>
    <property type="evidence" value="ECO:0007669"/>
    <property type="project" value="TreeGrafter"/>
</dbReference>
<dbReference type="GO" id="GO:0003743">
    <property type="term" value="F:translation initiation factor activity"/>
    <property type="evidence" value="ECO:0007669"/>
    <property type="project" value="UniProtKB-UniRule"/>
</dbReference>
<dbReference type="GO" id="GO:0032790">
    <property type="term" value="P:ribosome disassembly"/>
    <property type="evidence" value="ECO:0007669"/>
    <property type="project" value="TreeGrafter"/>
</dbReference>
<dbReference type="FunFam" id="3.10.20.80:FF:000001">
    <property type="entry name" value="Translation initiation factor IF-3"/>
    <property type="match status" value="1"/>
</dbReference>
<dbReference type="FunFam" id="3.30.110.10:FF:000001">
    <property type="entry name" value="Translation initiation factor IF-3"/>
    <property type="match status" value="1"/>
</dbReference>
<dbReference type="Gene3D" id="3.30.110.10">
    <property type="entry name" value="Translation initiation factor 3 (IF-3), C-terminal domain"/>
    <property type="match status" value="1"/>
</dbReference>
<dbReference type="Gene3D" id="3.10.20.80">
    <property type="entry name" value="Translation initiation factor 3 (IF-3), N-terminal domain"/>
    <property type="match status" value="1"/>
</dbReference>
<dbReference type="HAMAP" id="MF_00080">
    <property type="entry name" value="IF_3"/>
    <property type="match status" value="1"/>
</dbReference>
<dbReference type="InterPro" id="IPR036788">
    <property type="entry name" value="T_IF-3_C_sf"/>
</dbReference>
<dbReference type="InterPro" id="IPR036787">
    <property type="entry name" value="T_IF-3_N_sf"/>
</dbReference>
<dbReference type="InterPro" id="IPR001288">
    <property type="entry name" value="Translation_initiation_fac_3"/>
</dbReference>
<dbReference type="InterPro" id="IPR019815">
    <property type="entry name" value="Translation_initiation_fac_3_C"/>
</dbReference>
<dbReference type="InterPro" id="IPR019814">
    <property type="entry name" value="Translation_initiation_fac_3_N"/>
</dbReference>
<dbReference type="NCBIfam" id="TIGR00168">
    <property type="entry name" value="infC"/>
    <property type="match status" value="1"/>
</dbReference>
<dbReference type="PANTHER" id="PTHR10938">
    <property type="entry name" value="TRANSLATION INITIATION FACTOR IF-3"/>
    <property type="match status" value="1"/>
</dbReference>
<dbReference type="PANTHER" id="PTHR10938:SF0">
    <property type="entry name" value="TRANSLATION INITIATION FACTOR IF-3, MITOCHONDRIAL"/>
    <property type="match status" value="1"/>
</dbReference>
<dbReference type="Pfam" id="PF00707">
    <property type="entry name" value="IF3_C"/>
    <property type="match status" value="1"/>
</dbReference>
<dbReference type="Pfam" id="PF05198">
    <property type="entry name" value="IF3_N"/>
    <property type="match status" value="1"/>
</dbReference>
<dbReference type="SUPFAM" id="SSF55200">
    <property type="entry name" value="Translation initiation factor IF3, C-terminal domain"/>
    <property type="match status" value="1"/>
</dbReference>
<dbReference type="SUPFAM" id="SSF54364">
    <property type="entry name" value="Translation initiation factor IF3, N-terminal domain"/>
    <property type="match status" value="1"/>
</dbReference>
<sequence>MKEYLTNERIRAKQVRVVGPDGKQLGIMDTREALRLAQEMDLDLVLVGPNADPPVARIMDYSKWRYEQQMAEKEARKKAKRTEVKSIKFRVKIDEHDYQTKLGHIKRFLQEGHKVKVTIMFRGREVAHPELGERILNRVTEDLKDLAVVEMKPEMLGRDMNMLLAPVKVSA</sequence>
<name>IF3_THETH</name>
<reference key="1">
    <citation type="journal article" date="2003" name="Protein Expr. Purif.">
        <title>Expression in E. coli and purification of Thermus thermophilus translation initiation factors IF1 and IF3.</title>
        <authorList>
            <person name="Wolfrum A."/>
            <person name="Brock S."/>
            <person name="Mac T."/>
            <person name="Grillenbeck N."/>
        </authorList>
    </citation>
    <scope>NUCLEOTIDE SEQUENCE [LARGE SCALE GENOMIC DNA]</scope>
</reference>
<accession>Q70YI5</accession>
<keyword id="KW-0963">Cytoplasm</keyword>
<keyword id="KW-0396">Initiation factor</keyword>
<keyword id="KW-0648">Protein biosynthesis</keyword>
<gene>
    <name evidence="1" type="primary">infC</name>
</gene>
<comment type="function">
    <text evidence="1">IF-3 binds to the 30S ribosomal subunit and shifts the equilibrium between 70S ribosomes and their 50S and 30S subunits in favor of the free subunits, thus enhancing the availability of 30S subunits on which protein synthesis initiation begins.</text>
</comment>
<comment type="subunit">
    <text evidence="1">Monomer.</text>
</comment>
<comment type="subcellular location">
    <subcellularLocation>
        <location evidence="1">Cytoplasm</location>
    </subcellularLocation>
</comment>
<comment type="similarity">
    <text evidence="1">Belongs to the IF-3 family.</text>
</comment>
<evidence type="ECO:0000255" key="1">
    <source>
        <dbReference type="HAMAP-Rule" id="MF_00080"/>
    </source>
</evidence>
<protein>
    <recommendedName>
        <fullName evidence="1">Translation initiation factor IF-3</fullName>
    </recommendedName>
</protein>
<feature type="chain" id="PRO_0000280032" description="Translation initiation factor IF-3">
    <location>
        <begin position="1"/>
        <end position="171"/>
    </location>
</feature>